<reference key="1">
    <citation type="journal article" date="1998" name="DNA Res.">
        <title>Structural analysis of Arabidopsis thaliana chromosome 5. V. Sequence features of the regions of 1,381,565 bp covered by twenty one physically assigned P1 and TAC clones.</title>
        <authorList>
            <person name="Kaneko T."/>
            <person name="Kotani H."/>
            <person name="Nakamura Y."/>
            <person name="Sato S."/>
            <person name="Asamizu E."/>
            <person name="Miyajima N."/>
            <person name="Tabata S."/>
        </authorList>
    </citation>
    <scope>NUCLEOTIDE SEQUENCE [LARGE SCALE GENOMIC DNA]</scope>
    <source>
        <strain>cv. Columbia</strain>
    </source>
</reference>
<reference key="2">
    <citation type="journal article" date="1997" name="DNA Res.">
        <title>Structural analysis of Arabidopsis thaliana chromosome 5. II. Sequence features of the regions of 1,044,062 bp covered by thirteen physically assigned P1 clones.</title>
        <authorList>
            <person name="Kotani H."/>
            <person name="Nakamura Y."/>
            <person name="Sato S."/>
            <person name="Kaneko T."/>
            <person name="Asamizu E."/>
            <person name="Miyajima N."/>
            <person name="Tabata S."/>
        </authorList>
    </citation>
    <scope>NUCLEOTIDE SEQUENCE [LARGE SCALE GENOMIC DNA]</scope>
    <source>
        <strain>cv. Columbia</strain>
    </source>
</reference>
<reference key="3">
    <citation type="journal article" date="2017" name="Plant J.">
        <title>Araport11: a complete reannotation of the Arabidopsis thaliana reference genome.</title>
        <authorList>
            <person name="Cheng C.Y."/>
            <person name="Krishnakumar V."/>
            <person name="Chan A.P."/>
            <person name="Thibaud-Nissen F."/>
            <person name="Schobel S."/>
            <person name="Town C.D."/>
        </authorList>
    </citation>
    <scope>GENOME REANNOTATION</scope>
    <source>
        <strain>cv. Columbia</strain>
    </source>
</reference>
<reference key="4">
    <citation type="journal article" date="2001" name="Plant Physiol.">
        <title>Phylogenetic relationships within cation transporter families of Arabidopsis.</title>
        <authorList>
            <person name="Maeser P."/>
            <person name="Thomine S."/>
            <person name="Schroeder J.I."/>
            <person name="Ward J.M."/>
            <person name="Hirschi K."/>
            <person name="Sze H."/>
            <person name="Talke I.N."/>
            <person name="Amtmann A."/>
            <person name="Maathuis F.J.M."/>
            <person name="Sanders D."/>
            <person name="Harper J.F."/>
            <person name="Tchieu J."/>
            <person name="Gribskov M."/>
            <person name="Persans M.W."/>
            <person name="Salt D.E."/>
            <person name="Kim S.A."/>
            <person name="Guerinot M.L."/>
        </authorList>
    </citation>
    <scope>GENE FAMILY</scope>
    <scope>NOMENCLATURE</scope>
</reference>
<gene>
    <name type="primary">CCX2</name>
    <name type="synonym">CAX8</name>
    <name type="ordered locus">At5g17850</name>
    <name type="ORF">MPI7.1</name>
    <name type="ORF">MVA3.20</name>
    <name type="ORF">MVA3_200</name>
</gene>
<proteinExistence type="inferred from homology"/>
<accession>Q9FKP2</accession>
<evidence type="ECO:0000250" key="1"/>
<evidence type="ECO:0000255" key="2"/>
<evidence type="ECO:0000305" key="3"/>
<feature type="chain" id="PRO_0000416823" description="Cation/calcium exchanger 2">
    <location>
        <begin position="1"/>
        <end position="559"/>
    </location>
</feature>
<feature type="transmembrane region" description="Helical" evidence="2">
    <location>
        <begin position="10"/>
        <end position="30"/>
    </location>
</feature>
<feature type="transmembrane region" description="Helical" evidence="2">
    <location>
        <begin position="86"/>
        <end position="106"/>
    </location>
</feature>
<feature type="transmembrane region" description="Helical" evidence="2">
    <location>
        <begin position="131"/>
        <end position="151"/>
    </location>
</feature>
<feature type="transmembrane region" description="Helical" evidence="2">
    <location>
        <begin position="167"/>
        <end position="187"/>
    </location>
</feature>
<feature type="transmembrane region" description="Helical" evidence="2">
    <location>
        <begin position="203"/>
        <end position="223"/>
    </location>
</feature>
<feature type="transmembrane region" description="Helical" evidence="2">
    <location>
        <begin position="224"/>
        <end position="244"/>
    </location>
</feature>
<feature type="transmembrane region" description="Helical" evidence="2">
    <location>
        <begin position="331"/>
        <end position="351"/>
    </location>
</feature>
<feature type="transmembrane region" description="Helical" evidence="2">
    <location>
        <begin position="362"/>
        <end position="382"/>
    </location>
</feature>
<feature type="transmembrane region" description="Helical" evidence="2">
    <location>
        <begin position="393"/>
        <end position="413"/>
    </location>
</feature>
<feature type="transmembrane region" description="Helical" evidence="2">
    <location>
        <begin position="416"/>
        <end position="436"/>
    </location>
</feature>
<feature type="transmembrane region" description="Helical" evidence="2">
    <location>
        <begin position="480"/>
        <end position="500"/>
    </location>
</feature>
<feature type="transmembrane region" description="Helical" evidence="2">
    <location>
        <begin position="506"/>
        <end position="526"/>
    </location>
</feature>
<feature type="transmembrane region" description="Helical" evidence="2">
    <location>
        <begin position="531"/>
        <end position="551"/>
    </location>
</feature>
<comment type="function">
    <text evidence="1">Membrane-localized H(+)-dependent K(+) and Na(+) transporter.</text>
</comment>
<comment type="subcellular location">
    <subcellularLocation>
        <location evidence="1">Membrane</location>
        <topology evidence="1">Multi-pass membrane protein</topology>
    </subcellularLocation>
</comment>
<comment type="similarity">
    <text evidence="3">Belongs to the Ca(2+):cation antiporter (CaCA) (TC 2.A.19) family. Cation/calcium exchanger (CCX) subfamily.</text>
</comment>
<name>CCX2_ARATH</name>
<keyword id="KW-0050">Antiport</keyword>
<keyword id="KW-0406">Ion transport</keyword>
<keyword id="KW-0472">Membrane</keyword>
<keyword id="KW-0630">Potassium</keyword>
<keyword id="KW-0633">Potassium transport</keyword>
<keyword id="KW-1185">Reference proteome</keyword>
<keyword id="KW-0915">Sodium</keyword>
<keyword id="KW-0739">Sodium transport</keyword>
<keyword id="KW-0812">Transmembrane</keyword>
<keyword id="KW-1133">Transmembrane helix</keyword>
<keyword id="KW-0813">Transport</keyword>
<sequence>MGFSFSSNRFGYLTVTFLLVISCLLLGFFTNPVDSSALRPKSEHDCSALKHFHDYKSKCAYLKSIDPCASQGFFDYLSFLYCNFEGFPILGQFLLFLWLLLLFYLLGHTASEYFCSSLESLSKLLNLSPTVAGVTLLSLGNGAPDLFASLVSFMGESKGTYDVGLNTVVGGSGFVTCVVVGIISISLHKRRVRIERAAFIRDICFFCAAIGSLALILVYGKINFWGALGFCSLYAVYVAFVVLSWRFGGDQGAESDLESIHKRGSLSEPILQRDGLEEIEDGVVNGEHQIVDDDDDHQRYYYWKRLVIWAITLPLNLPRILTIPVVSEDKWSKPLAVASVTFAPVLLSFLWNWKRKPTSFEAGVVYLIGCLIGIALGFIAGATTKKLTPPKKWLLPWLAGGFVMSMTWSYISAQELVALLTSLGYIFGVSPSILGLTVLAWGNSIGDLITNLTMALHDGNEGAQVAVSGCYAGPIFNTLFALGISLVGCAWEAYPLSIVIKTDPRLLESLGFLVAGLVWSFLVLFSNRMRLGGVMGIGLLVIYLASLSLRIMQTVGDAH</sequence>
<protein>
    <recommendedName>
        <fullName>Cation/calcium exchanger 2</fullName>
    </recommendedName>
    <alternativeName>
        <fullName>Protein CATION EXCHANGER 8</fullName>
    </alternativeName>
</protein>
<organism>
    <name type="scientific">Arabidopsis thaliana</name>
    <name type="common">Mouse-ear cress</name>
    <dbReference type="NCBI Taxonomy" id="3702"/>
    <lineage>
        <taxon>Eukaryota</taxon>
        <taxon>Viridiplantae</taxon>
        <taxon>Streptophyta</taxon>
        <taxon>Embryophyta</taxon>
        <taxon>Tracheophyta</taxon>
        <taxon>Spermatophyta</taxon>
        <taxon>Magnoliopsida</taxon>
        <taxon>eudicotyledons</taxon>
        <taxon>Gunneridae</taxon>
        <taxon>Pentapetalae</taxon>
        <taxon>rosids</taxon>
        <taxon>malvids</taxon>
        <taxon>Brassicales</taxon>
        <taxon>Brassicaceae</taxon>
        <taxon>Camelineae</taxon>
        <taxon>Arabidopsis</taxon>
    </lineage>
</organism>
<dbReference type="EMBL" id="AB011480">
    <property type="protein sequence ID" value="BAB11218.1"/>
    <property type="molecule type" value="Genomic_DNA"/>
</dbReference>
<dbReference type="EMBL" id="AB006706">
    <property type="protein sequence ID" value="BAB11218.1"/>
    <property type="status" value="JOINED"/>
    <property type="molecule type" value="Genomic_DNA"/>
</dbReference>
<dbReference type="EMBL" id="CP002688">
    <property type="protein sequence ID" value="AED92478.1"/>
    <property type="molecule type" value="Genomic_DNA"/>
</dbReference>
<dbReference type="EMBL" id="CP002688">
    <property type="protein sequence ID" value="ANM69450.1"/>
    <property type="molecule type" value="Genomic_DNA"/>
</dbReference>
<dbReference type="RefSeq" id="NP_001318589.1">
    <property type="nucleotide sequence ID" value="NM_001343526.1"/>
</dbReference>
<dbReference type="RefSeq" id="NP_197287.1">
    <property type="nucleotide sequence ID" value="NM_121791.2"/>
</dbReference>
<dbReference type="BioGRID" id="16929">
    <property type="interactions" value="2"/>
</dbReference>
<dbReference type="FunCoup" id="Q9FKP2">
    <property type="interactions" value="579"/>
</dbReference>
<dbReference type="STRING" id="3702.Q9FKP2"/>
<dbReference type="PaxDb" id="3702-AT5G17850.1"/>
<dbReference type="ProteomicsDB" id="223964"/>
<dbReference type="EnsemblPlants" id="AT5G17850.1">
    <property type="protein sequence ID" value="AT5G17850.1"/>
    <property type="gene ID" value="AT5G17850"/>
</dbReference>
<dbReference type="EnsemblPlants" id="AT5G17850.2">
    <property type="protein sequence ID" value="AT5G17850.2"/>
    <property type="gene ID" value="AT5G17850"/>
</dbReference>
<dbReference type="GeneID" id="831653"/>
<dbReference type="Gramene" id="AT5G17850.1">
    <property type="protein sequence ID" value="AT5G17850.1"/>
    <property type="gene ID" value="AT5G17850"/>
</dbReference>
<dbReference type="Gramene" id="AT5G17850.2">
    <property type="protein sequence ID" value="AT5G17850.2"/>
    <property type="gene ID" value="AT5G17850"/>
</dbReference>
<dbReference type="KEGG" id="ath:AT5G17850"/>
<dbReference type="Araport" id="AT5G17850"/>
<dbReference type="TAIR" id="AT5G17850">
    <property type="gene designation" value="CCX2"/>
</dbReference>
<dbReference type="eggNOG" id="KOG2399">
    <property type="taxonomic scope" value="Eukaryota"/>
</dbReference>
<dbReference type="HOGENOM" id="CLU_004979_1_2_1"/>
<dbReference type="InParanoid" id="Q9FKP2"/>
<dbReference type="OMA" id="CLQIVLT"/>
<dbReference type="OrthoDB" id="407410at2759"/>
<dbReference type="PhylomeDB" id="Q9FKP2"/>
<dbReference type="PRO" id="PR:Q9FKP2"/>
<dbReference type="Proteomes" id="UP000006548">
    <property type="component" value="Chromosome 5"/>
</dbReference>
<dbReference type="ExpressionAtlas" id="Q9FKP2">
    <property type="expression patterns" value="baseline and differential"/>
</dbReference>
<dbReference type="GO" id="GO:0005783">
    <property type="term" value="C:endoplasmic reticulum"/>
    <property type="evidence" value="ECO:0000314"/>
    <property type="project" value="TAIR"/>
</dbReference>
<dbReference type="GO" id="GO:0016020">
    <property type="term" value="C:membrane"/>
    <property type="evidence" value="ECO:0007669"/>
    <property type="project" value="UniProtKB-SubCell"/>
</dbReference>
<dbReference type="GO" id="GO:0015297">
    <property type="term" value="F:antiporter activity"/>
    <property type="evidence" value="ECO:0007669"/>
    <property type="project" value="UniProtKB-KW"/>
</dbReference>
<dbReference type="GO" id="GO:0006813">
    <property type="term" value="P:potassium ion transport"/>
    <property type="evidence" value="ECO:0007669"/>
    <property type="project" value="UniProtKB-KW"/>
</dbReference>
<dbReference type="GO" id="GO:0006970">
    <property type="term" value="P:response to osmotic stress"/>
    <property type="evidence" value="ECO:0000315"/>
    <property type="project" value="TAIR"/>
</dbReference>
<dbReference type="GO" id="GO:0006814">
    <property type="term" value="P:sodium ion transport"/>
    <property type="evidence" value="ECO:0007669"/>
    <property type="project" value="UniProtKB-KW"/>
</dbReference>
<dbReference type="FunFam" id="1.20.1420.30:FF:000028">
    <property type="entry name" value="Cation/calcium exchanger 5"/>
    <property type="match status" value="1"/>
</dbReference>
<dbReference type="Gene3D" id="1.20.1420.30">
    <property type="entry name" value="NCX, central ion-binding region"/>
    <property type="match status" value="2"/>
</dbReference>
<dbReference type="InterPro" id="IPR051359">
    <property type="entry name" value="CaCA_antiporter"/>
</dbReference>
<dbReference type="InterPro" id="IPR004837">
    <property type="entry name" value="NaCa_Exmemb"/>
</dbReference>
<dbReference type="InterPro" id="IPR044880">
    <property type="entry name" value="NCX_ion-bd_dom_sf"/>
</dbReference>
<dbReference type="PANTHER" id="PTHR12266:SF18">
    <property type="entry name" value="CATION_CALCIUM EXCHANGER 2"/>
    <property type="match status" value="1"/>
</dbReference>
<dbReference type="PANTHER" id="PTHR12266">
    <property type="entry name" value="NA+/CA2+ K+ INDEPENDENT EXCHANGER"/>
    <property type="match status" value="1"/>
</dbReference>
<dbReference type="Pfam" id="PF01699">
    <property type="entry name" value="Na_Ca_ex"/>
    <property type="match status" value="2"/>
</dbReference>